<sequence length="448" mass="49765">MLHRYLPMTEEDKREMLKVIGVDSIDDLFADIPESVRFRGELNIKKAKSEPELFKELSALAEKNADTKKYTSFLGAGVYDHYIPVIVDHVISRSEFYTAYTPYQPEISQGELQAIFEFQTMICELTGMDVANSSMYDGGTALAEAMLLSAAHTKKKKVLLSKTVHPEYRDVVKTYAKGQRLCVVEIPFQNGVTDLEALKMEMDEEVACVIVQYPNFFGQIEPLKDIEPIAHSGKSMFVVASNPLALGILTPPGQFGADIVVGDAQPFGIPMQFGGPHCGYFAVKSALIRKIPGRLVGQTSDEEGRRGFVLTLQAREQHIRRDKATSNICSNQALNALAASVAMTALGKKGVKEMAAMNIQKAQYAKNELVKHGFHVPFPGPFFNEFVVRLEKPVAEVNKRLLEKGIIGGYDVGRDYPELQNHMLIAVTELRTKKEIDTFVKELGDCHA</sequence>
<feature type="chain" id="PRO_1000212662" description="Probable glycine dehydrogenase (decarboxylating) subunit 1">
    <location>
        <begin position="1"/>
        <end position="448"/>
    </location>
</feature>
<reference key="1">
    <citation type="submission" date="2009-06" db="EMBL/GenBank/DDBJ databases">
        <title>Complete sequence of chromosome of Geopacillus sp. WCH70.</title>
        <authorList>
            <consortium name="US DOE Joint Genome Institute"/>
            <person name="Lucas S."/>
            <person name="Copeland A."/>
            <person name="Lapidus A."/>
            <person name="Glavina del Rio T."/>
            <person name="Dalin E."/>
            <person name="Tice H."/>
            <person name="Bruce D."/>
            <person name="Goodwin L."/>
            <person name="Pitluck S."/>
            <person name="Chertkov O."/>
            <person name="Brettin T."/>
            <person name="Detter J.C."/>
            <person name="Han C."/>
            <person name="Larimer F."/>
            <person name="Land M."/>
            <person name="Hauser L."/>
            <person name="Kyrpides N."/>
            <person name="Mikhailova N."/>
            <person name="Brumm P."/>
            <person name="Mead D.A."/>
            <person name="Richardson P."/>
        </authorList>
    </citation>
    <scope>NUCLEOTIDE SEQUENCE [LARGE SCALE GENOMIC DNA]</scope>
    <source>
        <strain>WCH70</strain>
    </source>
</reference>
<accession>C5D4A1</accession>
<name>GCSPA_GEOSW</name>
<proteinExistence type="inferred from homology"/>
<gene>
    <name evidence="1" type="primary">gcvPA</name>
    <name type="ordered locus">GWCH70_2360</name>
</gene>
<dbReference type="EC" id="1.4.4.2" evidence="1"/>
<dbReference type="EMBL" id="CP001638">
    <property type="protein sequence ID" value="ACS25057.1"/>
    <property type="molecule type" value="Genomic_DNA"/>
</dbReference>
<dbReference type="SMR" id="C5D4A1"/>
<dbReference type="STRING" id="471223.GWCH70_2360"/>
<dbReference type="KEGG" id="gwc:GWCH70_2360"/>
<dbReference type="eggNOG" id="COG0403">
    <property type="taxonomic scope" value="Bacteria"/>
</dbReference>
<dbReference type="HOGENOM" id="CLU_004620_0_2_9"/>
<dbReference type="OrthoDB" id="9771867at2"/>
<dbReference type="GO" id="GO:0004375">
    <property type="term" value="F:glycine dehydrogenase (decarboxylating) activity"/>
    <property type="evidence" value="ECO:0007669"/>
    <property type="project" value="UniProtKB-EC"/>
</dbReference>
<dbReference type="GO" id="GO:0019464">
    <property type="term" value="P:glycine decarboxylation via glycine cleavage system"/>
    <property type="evidence" value="ECO:0007669"/>
    <property type="project" value="UniProtKB-UniRule"/>
</dbReference>
<dbReference type="GO" id="GO:0009116">
    <property type="term" value="P:nucleoside metabolic process"/>
    <property type="evidence" value="ECO:0007669"/>
    <property type="project" value="InterPro"/>
</dbReference>
<dbReference type="CDD" id="cd00613">
    <property type="entry name" value="GDC-P"/>
    <property type="match status" value="1"/>
</dbReference>
<dbReference type="Gene3D" id="3.90.1150.10">
    <property type="entry name" value="Aspartate Aminotransferase, domain 1"/>
    <property type="match status" value="1"/>
</dbReference>
<dbReference type="Gene3D" id="3.40.640.10">
    <property type="entry name" value="Type I PLP-dependent aspartate aminotransferase-like (Major domain)"/>
    <property type="match status" value="1"/>
</dbReference>
<dbReference type="HAMAP" id="MF_00712">
    <property type="entry name" value="GcvPA"/>
    <property type="match status" value="1"/>
</dbReference>
<dbReference type="InterPro" id="IPR023010">
    <property type="entry name" value="GcvPA"/>
</dbReference>
<dbReference type="InterPro" id="IPR049315">
    <property type="entry name" value="GDC-P_N"/>
</dbReference>
<dbReference type="InterPro" id="IPR020581">
    <property type="entry name" value="GDC_P"/>
</dbReference>
<dbReference type="InterPro" id="IPR015424">
    <property type="entry name" value="PyrdxlP-dep_Trfase"/>
</dbReference>
<dbReference type="InterPro" id="IPR015421">
    <property type="entry name" value="PyrdxlP-dep_Trfase_major"/>
</dbReference>
<dbReference type="InterPro" id="IPR015422">
    <property type="entry name" value="PyrdxlP-dep_Trfase_small"/>
</dbReference>
<dbReference type="NCBIfam" id="NF001696">
    <property type="entry name" value="PRK00451.1"/>
    <property type="match status" value="1"/>
</dbReference>
<dbReference type="PANTHER" id="PTHR42806">
    <property type="entry name" value="GLYCINE CLEAVAGE SYSTEM P-PROTEIN"/>
    <property type="match status" value="1"/>
</dbReference>
<dbReference type="PANTHER" id="PTHR42806:SF1">
    <property type="entry name" value="GLYCINE DEHYDROGENASE (DECARBOXYLATING)"/>
    <property type="match status" value="1"/>
</dbReference>
<dbReference type="Pfam" id="PF02347">
    <property type="entry name" value="GDC-P"/>
    <property type="match status" value="1"/>
</dbReference>
<dbReference type="PIRSF" id="PIRSF006815">
    <property type="entry name" value="GcvPA"/>
    <property type="match status" value="1"/>
</dbReference>
<dbReference type="SUPFAM" id="SSF53383">
    <property type="entry name" value="PLP-dependent transferases"/>
    <property type="match status" value="1"/>
</dbReference>
<organism>
    <name type="scientific">Geobacillus sp. (strain WCH70)</name>
    <dbReference type="NCBI Taxonomy" id="471223"/>
    <lineage>
        <taxon>Bacteria</taxon>
        <taxon>Bacillati</taxon>
        <taxon>Bacillota</taxon>
        <taxon>Bacilli</taxon>
        <taxon>Bacillales</taxon>
        <taxon>Anoxybacillaceae</taxon>
        <taxon>Geobacillus</taxon>
    </lineage>
</organism>
<protein>
    <recommendedName>
        <fullName evidence="1">Probable glycine dehydrogenase (decarboxylating) subunit 1</fullName>
        <ecNumber evidence="1">1.4.4.2</ecNumber>
    </recommendedName>
    <alternativeName>
        <fullName evidence="1">Glycine cleavage system P-protein subunit 1</fullName>
    </alternativeName>
    <alternativeName>
        <fullName evidence="1">Glycine decarboxylase subunit 1</fullName>
    </alternativeName>
    <alternativeName>
        <fullName evidence="1">Glycine dehydrogenase (aminomethyl-transferring) subunit 1</fullName>
    </alternativeName>
</protein>
<comment type="function">
    <text evidence="1">The glycine cleavage system catalyzes the degradation of glycine. The P protein binds the alpha-amino group of glycine through its pyridoxal phosphate cofactor; CO(2) is released and the remaining methylamine moiety is then transferred to the lipoamide cofactor of the H protein.</text>
</comment>
<comment type="catalytic activity">
    <reaction evidence="1">
        <text>N(6)-[(R)-lipoyl]-L-lysyl-[glycine-cleavage complex H protein] + glycine + H(+) = N(6)-[(R)-S(8)-aminomethyldihydrolipoyl]-L-lysyl-[glycine-cleavage complex H protein] + CO2</text>
        <dbReference type="Rhea" id="RHEA:24304"/>
        <dbReference type="Rhea" id="RHEA-COMP:10494"/>
        <dbReference type="Rhea" id="RHEA-COMP:10495"/>
        <dbReference type="ChEBI" id="CHEBI:15378"/>
        <dbReference type="ChEBI" id="CHEBI:16526"/>
        <dbReference type="ChEBI" id="CHEBI:57305"/>
        <dbReference type="ChEBI" id="CHEBI:83099"/>
        <dbReference type="ChEBI" id="CHEBI:83143"/>
        <dbReference type="EC" id="1.4.4.2"/>
    </reaction>
</comment>
<comment type="subunit">
    <text evidence="1">The glycine cleavage system is composed of four proteins: P, T, L and H. In this organism, the P 'protein' is a heterodimer of two subunits.</text>
</comment>
<comment type="similarity">
    <text evidence="1">Belongs to the GcvP family. N-terminal subunit subfamily.</text>
</comment>
<evidence type="ECO:0000255" key="1">
    <source>
        <dbReference type="HAMAP-Rule" id="MF_00712"/>
    </source>
</evidence>
<keyword id="KW-0560">Oxidoreductase</keyword>